<sequence>MELHNLSSPSPSLSSSVLPPSFSPSPSSAPSAFTTVGGSSGGPCHPTSSSLVSAFLAPILALEFVLGLVGNSLALFIFCIHTRPWTSNTVFLVSLVAADFLLISNLPLRVDYYLLHETWRFGAAACKVNLFMLSTNRTASVVFLTAIALNRYLKVVQPHHVLSRASVGAAARVAGGLWVGILLLNGHLLLSTFSGPSCLSYRVGTKPSASLRWHQALYLLEFFLPLALILFAIVSIGLTIRNRGLGGQAGPQRAMRVLAMVVAVYTICFLPSIIFGMASMVAFWLSACRSLDLCTQLFHGSLAFTYLNSVLDPVLYCFSSPNFLHQSRALLGLTRGRQGPVSDESSYQPSRQWRYREASRKAEAIGKLKVQGEVSLEKEGSSQG</sequence>
<gene>
    <name type="primary">OXER1</name>
    <name type="synonym">GPR170</name>
    <name type="synonym">TG1019</name>
</gene>
<dbReference type="EMBL" id="AB083055">
    <property type="protein sequence ID" value="BAC11806.2"/>
    <property type="molecule type" value="mRNA"/>
</dbReference>
<dbReference type="EMBL" id="AY158687">
    <property type="protein sequence ID" value="AAO17739.1"/>
    <property type="molecule type" value="mRNA"/>
</dbReference>
<dbReference type="EMBL" id="AB065652">
    <property type="protein sequence ID" value="BAC05878.1"/>
    <property type="molecule type" value="Genomic_DNA"/>
</dbReference>
<dbReference type="EMBL" id="AB083630">
    <property type="protein sequence ID" value="BAB89343.1"/>
    <property type="molecule type" value="Genomic_DNA"/>
</dbReference>
<dbReference type="EMBL" id="AC098824">
    <property type="protein sequence ID" value="AAY14700.1"/>
    <property type="molecule type" value="Genomic_DNA"/>
</dbReference>
<dbReference type="EMBL" id="BC063549">
    <property type="protein sequence ID" value="AAH63549.1"/>
    <property type="molecule type" value="mRNA"/>
</dbReference>
<dbReference type="CCDS" id="CCDS1810.2"/>
<dbReference type="RefSeq" id="NP_683765.2">
    <property type="nucleotide sequence ID" value="NM_148962.5"/>
</dbReference>
<dbReference type="SMR" id="Q8TDS5"/>
<dbReference type="BioGRID" id="127909">
    <property type="interactions" value="49"/>
</dbReference>
<dbReference type="FunCoup" id="Q8TDS5">
    <property type="interactions" value="285"/>
</dbReference>
<dbReference type="IntAct" id="Q8TDS5">
    <property type="interactions" value="43"/>
</dbReference>
<dbReference type="STRING" id="9606.ENSP00000367930"/>
<dbReference type="BindingDB" id="Q8TDS5"/>
<dbReference type="ChEMBL" id="CHEMBL1628461"/>
<dbReference type="DrugCentral" id="Q8TDS5"/>
<dbReference type="GuidetoPHARMACOLOGY" id="271"/>
<dbReference type="SwissLipids" id="SLP:000001564"/>
<dbReference type="GlyCosmos" id="Q8TDS5">
    <property type="glycosylation" value="1 site, No reported glycans"/>
</dbReference>
<dbReference type="GlyGen" id="Q8TDS5">
    <property type="glycosylation" value="1 site"/>
</dbReference>
<dbReference type="PhosphoSitePlus" id="Q8TDS5"/>
<dbReference type="BioMuta" id="OXER1"/>
<dbReference type="DMDM" id="74762623"/>
<dbReference type="MassIVE" id="Q8TDS5"/>
<dbReference type="PaxDb" id="9606-ENSP00000367930"/>
<dbReference type="PeptideAtlas" id="Q8TDS5"/>
<dbReference type="ProteomicsDB" id="74336"/>
<dbReference type="Antibodypedia" id="14829">
    <property type="antibodies" value="247 antibodies from 32 providers"/>
</dbReference>
<dbReference type="DNASU" id="165140"/>
<dbReference type="Ensembl" id="ENST00000378661.4">
    <property type="protein sequence ID" value="ENSP00000367930.3"/>
    <property type="gene ID" value="ENSG00000162881.7"/>
</dbReference>
<dbReference type="GeneID" id="165140"/>
<dbReference type="KEGG" id="hsa:165140"/>
<dbReference type="MANE-Select" id="ENST00000378661.4">
    <property type="protein sequence ID" value="ENSP00000367930.3"/>
    <property type="RefSeq nucleotide sequence ID" value="NM_148962.5"/>
    <property type="RefSeq protein sequence ID" value="NP_683765.2"/>
</dbReference>
<dbReference type="UCSC" id="uc002rss.4">
    <property type="organism name" value="human"/>
</dbReference>
<dbReference type="AGR" id="HGNC:24884"/>
<dbReference type="CTD" id="165140"/>
<dbReference type="DisGeNET" id="165140"/>
<dbReference type="GeneCards" id="OXER1"/>
<dbReference type="HGNC" id="HGNC:24884">
    <property type="gene designation" value="OXER1"/>
</dbReference>
<dbReference type="HPA" id="ENSG00000162881">
    <property type="expression patterns" value="Tissue enriched (liver)"/>
</dbReference>
<dbReference type="MIM" id="620064">
    <property type="type" value="gene"/>
</dbReference>
<dbReference type="neXtProt" id="NX_Q8TDS5"/>
<dbReference type="OpenTargets" id="ENSG00000162881"/>
<dbReference type="PharmGKB" id="PA134983779"/>
<dbReference type="VEuPathDB" id="HostDB:ENSG00000162881"/>
<dbReference type="eggNOG" id="KOG3656">
    <property type="taxonomic scope" value="Eukaryota"/>
</dbReference>
<dbReference type="GeneTree" id="ENSGT00990000203619"/>
<dbReference type="HOGENOM" id="CLU_009579_8_2_1"/>
<dbReference type="InParanoid" id="Q8TDS5"/>
<dbReference type="OrthoDB" id="10055255at2759"/>
<dbReference type="PAN-GO" id="Q8TDS5">
    <property type="GO annotations" value="3 GO annotations based on evolutionary models"/>
</dbReference>
<dbReference type="PhylomeDB" id="Q8TDS5"/>
<dbReference type="TreeFam" id="TF330775"/>
<dbReference type="PathwayCommons" id="Q8TDS5"/>
<dbReference type="Reactome" id="R-HSA-391903">
    <property type="pathway name" value="Eicosanoid ligand-binding receptors"/>
</dbReference>
<dbReference type="Reactome" id="R-HSA-418594">
    <property type="pathway name" value="G alpha (i) signalling events"/>
</dbReference>
<dbReference type="SignaLink" id="Q8TDS5"/>
<dbReference type="SIGNOR" id="Q8TDS5"/>
<dbReference type="BioGRID-ORCS" id="165140">
    <property type="hits" value="15 hits in 1143 CRISPR screens"/>
</dbReference>
<dbReference type="GeneWiki" id="Oxoeicosanoid_receptor_1"/>
<dbReference type="GenomeRNAi" id="165140"/>
<dbReference type="Pharos" id="Q8TDS5">
    <property type="development level" value="Tchem"/>
</dbReference>
<dbReference type="PRO" id="PR:Q8TDS5"/>
<dbReference type="Proteomes" id="UP000005640">
    <property type="component" value="Chromosome 2"/>
</dbReference>
<dbReference type="RNAct" id="Q8TDS5">
    <property type="molecule type" value="protein"/>
</dbReference>
<dbReference type="Bgee" id="ENSG00000162881">
    <property type="expression patterns" value="Expressed in right lobe of liver and 96 other cell types or tissues"/>
</dbReference>
<dbReference type="GO" id="GO:0005886">
    <property type="term" value="C:plasma membrane"/>
    <property type="evidence" value="ECO:0000318"/>
    <property type="project" value="GO_Central"/>
</dbReference>
<dbReference type="GO" id="GO:0050648">
    <property type="term" value="F:5(S)-hydroxyperoxy-6E,8Z,11Z,14Z-icosatetraenoic acid binding"/>
    <property type="evidence" value="ECO:0000314"/>
    <property type="project" value="UniProtKB"/>
</dbReference>
<dbReference type="GO" id="GO:0050647">
    <property type="term" value="F:5-hydroxy-6E,8Z,11Z,14Z-icosatetraenoic acid binding"/>
    <property type="evidence" value="ECO:0000314"/>
    <property type="project" value="UniProtKB"/>
</dbReference>
<dbReference type="GO" id="GO:0050646">
    <property type="term" value="F:5-oxo-6E,8Z,11Z,14Z-icosatetraenoic acid binding"/>
    <property type="evidence" value="ECO:0000314"/>
    <property type="project" value="UniProtKB"/>
</dbReference>
<dbReference type="GO" id="GO:0004930">
    <property type="term" value="F:G protein-coupled receptor activity"/>
    <property type="evidence" value="ECO:0000315"/>
    <property type="project" value="UniProtKB"/>
</dbReference>
<dbReference type="GO" id="GO:0007193">
    <property type="term" value="P:adenylate cyclase-inhibiting G protein-coupled receptor signaling pathway"/>
    <property type="evidence" value="ECO:0000314"/>
    <property type="project" value="UniProtKB"/>
</dbReference>
<dbReference type="GO" id="GO:0007186">
    <property type="term" value="P:G protein-coupled receptor signaling pathway"/>
    <property type="evidence" value="ECO:0000318"/>
    <property type="project" value="GO_Central"/>
</dbReference>
<dbReference type="CDD" id="cd15200">
    <property type="entry name" value="7tmA_OXER1"/>
    <property type="match status" value="1"/>
</dbReference>
<dbReference type="Gene3D" id="1.20.1070.10">
    <property type="entry name" value="Rhodopsin 7-helix transmembrane proteins"/>
    <property type="match status" value="1"/>
</dbReference>
<dbReference type="InterPro" id="IPR000276">
    <property type="entry name" value="GPCR_Rhodpsn"/>
</dbReference>
<dbReference type="InterPro" id="IPR017452">
    <property type="entry name" value="GPCR_Rhodpsn_7TM"/>
</dbReference>
<dbReference type="InterPro" id="IPR051893">
    <property type="entry name" value="HCARs"/>
</dbReference>
<dbReference type="PANTHER" id="PTHR46048">
    <property type="entry name" value="HYDROXYCARBOXYLIC ACID RECEPTOR 2"/>
    <property type="match status" value="1"/>
</dbReference>
<dbReference type="PANTHER" id="PTHR46048:SF1">
    <property type="entry name" value="OXOEICOSANOID RECEPTOR 1"/>
    <property type="match status" value="1"/>
</dbReference>
<dbReference type="Pfam" id="PF00001">
    <property type="entry name" value="7tm_1"/>
    <property type="match status" value="1"/>
</dbReference>
<dbReference type="PRINTS" id="PR00237">
    <property type="entry name" value="GPCRRHODOPSN"/>
</dbReference>
<dbReference type="SUPFAM" id="SSF81321">
    <property type="entry name" value="Family A G protein-coupled receptor-like"/>
    <property type="match status" value="1"/>
</dbReference>
<dbReference type="PROSITE" id="PS00237">
    <property type="entry name" value="G_PROTEIN_RECEP_F1_1"/>
    <property type="match status" value="1"/>
</dbReference>
<dbReference type="PROSITE" id="PS50262">
    <property type="entry name" value="G_PROTEIN_RECEP_F1_2"/>
    <property type="match status" value="1"/>
</dbReference>
<feature type="chain" id="PRO_0000069993" description="Oxoeicosanoid receptor 1">
    <location>
        <begin position="1"/>
        <end position="384"/>
    </location>
</feature>
<feature type="topological domain" description="Extracellular" evidence="6">
    <location>
        <begin position="1"/>
        <end position="58"/>
    </location>
</feature>
<feature type="transmembrane region" description="Helical" evidence="1">
    <location>
        <begin position="59"/>
        <end position="79"/>
    </location>
</feature>
<feature type="topological domain" description="Cytoplasmic" evidence="6">
    <location>
        <begin position="80"/>
        <end position="87"/>
    </location>
</feature>
<feature type="transmembrane region" description="Helical" evidence="1">
    <location>
        <begin position="88"/>
        <end position="108"/>
    </location>
</feature>
<feature type="topological domain" description="Extracellular" evidence="6">
    <location>
        <begin position="109"/>
        <end position="129"/>
    </location>
</feature>
<feature type="transmembrane region" description="Helical" evidence="1">
    <location>
        <begin position="130"/>
        <end position="152"/>
    </location>
</feature>
<feature type="topological domain" description="Cytoplasmic" evidence="6">
    <location>
        <begin position="153"/>
        <end position="172"/>
    </location>
</feature>
<feature type="transmembrane region" description="Helical" evidence="1">
    <location>
        <begin position="173"/>
        <end position="193"/>
    </location>
</feature>
<feature type="topological domain" description="Extracellular" evidence="6">
    <location>
        <begin position="194"/>
        <end position="215"/>
    </location>
</feature>
<feature type="transmembrane region" description="Helical" evidence="1">
    <location>
        <begin position="216"/>
        <end position="236"/>
    </location>
</feature>
<feature type="topological domain" description="Cytoplasmic" evidence="6">
    <location>
        <begin position="237"/>
        <end position="256"/>
    </location>
</feature>
<feature type="transmembrane region" description="Helical" evidence="1">
    <location>
        <begin position="257"/>
        <end position="277"/>
    </location>
</feature>
<feature type="topological domain" description="Extracellular" evidence="6">
    <location>
        <begin position="278"/>
        <end position="297"/>
    </location>
</feature>
<feature type="transmembrane region" description="Helical" evidence="1">
    <location>
        <begin position="298"/>
        <end position="318"/>
    </location>
</feature>
<feature type="topological domain" description="Cytoplasmic" evidence="6">
    <location>
        <begin position="319"/>
        <end position="384"/>
    </location>
</feature>
<feature type="region of interest" description="Disordered" evidence="3">
    <location>
        <begin position="1"/>
        <end position="21"/>
    </location>
</feature>
<feature type="compositionally biased region" description="Low complexity" evidence="3">
    <location>
        <begin position="7"/>
        <end position="21"/>
    </location>
</feature>
<feature type="glycosylation site" description="N-linked (GlcNAc...) asparagine" evidence="1">
    <location>
        <position position="5"/>
    </location>
</feature>
<feature type="disulfide bond" evidence="2">
    <location>
        <begin position="126"/>
        <end position="198"/>
    </location>
</feature>
<feature type="sequence variant" id="VAR_049428" description="In dbSNP:rs17029947.">
    <original>M</original>
    <variation>L</variation>
    <location>
        <position position="277"/>
    </location>
</feature>
<feature type="sequence variant" id="VAR_023940" description="In dbSNP:rs2278586." evidence="5">
    <original>L</original>
    <variation>V</variation>
    <location>
        <position position="368"/>
    </location>
</feature>
<proteinExistence type="evidence at protein level"/>
<evidence type="ECO:0000255" key="1"/>
<evidence type="ECO:0000255" key="2">
    <source>
        <dbReference type="PROSITE-ProRule" id="PRU00521"/>
    </source>
</evidence>
<evidence type="ECO:0000256" key="3">
    <source>
        <dbReference type="SAM" id="MobiDB-lite"/>
    </source>
</evidence>
<evidence type="ECO:0000269" key="4">
    <source>
    </source>
</evidence>
<evidence type="ECO:0000269" key="5">
    <source>
    </source>
</evidence>
<evidence type="ECO:0000305" key="6"/>
<comment type="function">
    <text evidence="4 5">Receptor for eicosanoids and polyunsaturated fatty acids such as 5-oxo-6E,8Z,11Z,14Z-eicosatetraenoic acid (5-OXO-ETE), 5(S)-hydroperoxy-6E,8Z,11Z,14Z-eicosatetraenoic acid (5(S)-HPETE) and arachidonic acid. Seems to be coupled to the G(i)/G(o), families of heteromeric G proteins.</text>
</comment>
<comment type="interaction">
    <interactant intactId="EBI-12813389">
        <id>Q8TDS5</id>
    </interactant>
    <interactant intactId="EBI-12224467">
        <id>Q9NYG5-2</id>
        <label>ANAPC11</label>
    </interactant>
    <organismsDiffer>false</organismsDiffer>
    <experiments>3</experiments>
</comment>
<comment type="interaction">
    <interactant intactId="EBI-12813389">
        <id>Q8TDS5</id>
    </interactant>
    <interactant intactId="EBI-12015080">
        <id>Q8WXK3-2</id>
        <label>ASB13</label>
    </interactant>
    <organismsDiffer>false</organismsDiffer>
    <experiments>3</experiments>
</comment>
<comment type="interaction">
    <interactant intactId="EBI-12813389">
        <id>Q8TDS5</id>
    </interactant>
    <interactant intactId="EBI-12006308">
        <id>Q7Z3C6-3</id>
        <label>ATG9A</label>
    </interactant>
    <organismsDiffer>false</organismsDiffer>
    <experiments>3</experiments>
</comment>
<comment type="interaction">
    <interactant intactId="EBI-12813389">
        <id>Q8TDS5</id>
    </interactant>
    <interactant intactId="EBI-12010594">
        <id>O75909-2</id>
        <label>CCNK</label>
    </interactant>
    <organismsDiffer>false</organismsDiffer>
    <experiments>3</experiments>
</comment>
<comment type="interaction">
    <interactant intactId="EBI-12813389">
        <id>Q8TDS5</id>
    </interactant>
    <interactant intactId="EBI-750444">
        <id>P53672</id>
        <label>CRYBA2</label>
    </interactant>
    <organismsDiffer>false</organismsDiffer>
    <experiments>3</experiments>
</comment>
<comment type="interaction">
    <interactant intactId="EBI-12813389">
        <id>Q8TDS5</id>
    </interactant>
    <interactant intactId="EBI-11958551">
        <id>Q8N7B9-2</id>
        <label>EFCAB3</label>
    </interactant>
    <organismsDiffer>false</organismsDiffer>
    <experiments>3</experiments>
</comment>
<comment type="interaction">
    <interactant intactId="EBI-12813389">
        <id>Q8TDS5</id>
    </interactant>
    <interactant intactId="EBI-10213520">
        <id>Q6NXG1</id>
        <label>ESRP1</label>
    </interactant>
    <organismsDiffer>false</organismsDiffer>
    <experiments>3</experiments>
</comment>
<comment type="interaction">
    <interactant intactId="EBI-12813389">
        <id>Q8TDS5</id>
    </interactant>
    <interactant intactId="EBI-1759806">
        <id>O75593</id>
        <label>FOXH1</label>
    </interactant>
    <organismsDiffer>false</organismsDiffer>
    <experiments>3</experiments>
</comment>
<comment type="interaction">
    <interactant intactId="EBI-12813389">
        <id>Q8TDS5</id>
    </interactant>
    <interactant intactId="EBI-2798841">
        <id>P35680</id>
        <label>HNF1B</label>
    </interactant>
    <organismsDiffer>false</organismsDiffer>
    <experiments>3</experiments>
</comment>
<comment type="interaction">
    <interactant intactId="EBI-12813389">
        <id>Q8TDS5</id>
    </interactant>
    <interactant intactId="EBI-351590">
        <id>P31943</id>
        <label>HNRNPH1</label>
    </interactant>
    <organismsDiffer>false</organismsDiffer>
    <experiments>3</experiments>
</comment>
<comment type="interaction">
    <interactant intactId="EBI-12813389">
        <id>Q8TDS5</id>
    </interactant>
    <interactant intactId="EBI-748258">
        <id>Q5TA45</id>
        <label>INTS11</label>
    </interactant>
    <organismsDiffer>false</organismsDiffer>
    <experiments>3</experiments>
</comment>
<comment type="interaction">
    <interactant intactId="EBI-12813389">
        <id>Q8TDS5</id>
    </interactant>
    <interactant intactId="EBI-9090173">
        <id>P0C870</id>
        <label>JMJD7</label>
    </interactant>
    <organismsDiffer>false</organismsDiffer>
    <experiments>3</experiments>
</comment>
<comment type="interaction">
    <interactant intactId="EBI-12813389">
        <id>Q8TDS5</id>
    </interactant>
    <interactant intactId="EBI-11953334">
        <id>P60328</id>
        <label>KRTAP12-3</label>
    </interactant>
    <organismsDiffer>false</organismsDiffer>
    <experiments>3</experiments>
</comment>
<comment type="interaction">
    <interactant intactId="EBI-12813389">
        <id>Q8TDS5</id>
    </interactant>
    <interactant intactId="EBI-1048945">
        <id>Q3LI72</id>
        <label>KRTAP19-5</label>
    </interactant>
    <organismsDiffer>false</organismsDiffer>
    <experiments>3</experiments>
</comment>
<comment type="interaction">
    <interactant intactId="EBI-12813389">
        <id>Q8TDS5</id>
    </interactant>
    <interactant intactId="EBI-10172511">
        <id>Q9BYR5</id>
        <label>KRTAP4-2</label>
    </interactant>
    <organismsDiffer>false</organismsDiffer>
    <experiments>3</experiments>
</comment>
<comment type="interaction">
    <interactant intactId="EBI-12813389">
        <id>Q8TDS5</id>
    </interactant>
    <interactant intactId="EBI-10250562">
        <id>Q6L8G9</id>
        <label>KRTAP5-6</label>
    </interactant>
    <organismsDiffer>false</organismsDiffer>
    <experiments>3</experiments>
</comment>
<comment type="interaction">
    <interactant intactId="EBI-12813389">
        <id>Q8TDS5</id>
    </interactant>
    <interactant intactId="EBI-22311199">
        <id>Q3LI67</id>
        <label>KRTAP6-3</label>
    </interactant>
    <organismsDiffer>false</organismsDiffer>
    <experiments>3</experiments>
</comment>
<comment type="interaction">
    <interactant intactId="EBI-12813389">
        <id>Q8TDS5</id>
    </interactant>
    <interactant intactId="EBI-9088686">
        <id>Q14847-2</id>
        <label>LASP1</label>
    </interactant>
    <organismsDiffer>false</organismsDiffer>
    <experiments>3</experiments>
</comment>
<comment type="interaction">
    <interactant intactId="EBI-12813389">
        <id>Q8TDS5</id>
    </interactant>
    <interactant intactId="EBI-394558">
        <id>Q71SY5</id>
        <label>MED25</label>
    </interactant>
    <organismsDiffer>false</organismsDiffer>
    <experiments>3</experiments>
</comment>
<comment type="interaction">
    <interactant intactId="EBI-12813389">
        <id>Q8TDS5</id>
    </interactant>
    <interactant intactId="EBI-746987">
        <id>P62166</id>
        <label>NCS1</label>
    </interactant>
    <organismsDiffer>false</organismsDiffer>
    <experiments>3</experiments>
</comment>
<comment type="interaction">
    <interactant intactId="EBI-12813389">
        <id>Q8TDS5</id>
    </interactant>
    <interactant intactId="EBI-1752987">
        <id>Q86SG6</id>
        <label>NEK8</label>
    </interactant>
    <organismsDiffer>false</organismsDiffer>
    <experiments>3</experiments>
</comment>
<comment type="interaction">
    <interactant intactId="EBI-12813389">
        <id>Q8TDS5</id>
    </interactant>
    <interactant intactId="EBI-395927">
        <id>Q9BVI4</id>
        <label>NOC4L</label>
    </interactant>
    <organismsDiffer>false</organismsDiffer>
    <experiments>3</experiments>
</comment>
<comment type="interaction">
    <interactant intactId="EBI-12813389">
        <id>Q8TDS5</id>
    </interactant>
    <interactant intactId="EBI-740446">
        <id>P32242</id>
        <label>OTX1</label>
    </interactant>
    <organismsDiffer>false</organismsDiffer>
    <experiments>3</experiments>
</comment>
<comment type="interaction">
    <interactant intactId="EBI-12813389">
        <id>Q8TDS5</id>
    </interactant>
    <interactant intactId="EBI-769257">
        <id>Q9NRQ2</id>
        <label>PLSCR4</label>
    </interactant>
    <organismsDiffer>false</organismsDiffer>
    <experiments>3</experiments>
</comment>
<comment type="interaction">
    <interactant intactId="EBI-12813389">
        <id>Q8TDS5</id>
    </interactant>
    <interactant intactId="EBI-1053424">
        <id>O43741</id>
        <label>PRKAB2</label>
    </interactant>
    <organismsDiffer>false</organismsDiffer>
    <experiments>3</experiments>
</comment>
<comment type="interaction">
    <interactant intactId="EBI-12813389">
        <id>Q8TDS5</id>
    </interactant>
    <interactant intactId="EBI-9027467">
        <id>O75360</id>
        <label>PROP1</label>
    </interactant>
    <organismsDiffer>false</organismsDiffer>
    <experiments>3</experiments>
</comment>
<comment type="interaction">
    <interactant intactId="EBI-12813389">
        <id>Q8TDS5</id>
    </interactant>
    <interactant intactId="EBI-12754095">
        <id>P86480</id>
        <label>PRR20D</label>
    </interactant>
    <organismsDiffer>false</organismsDiffer>
    <experiments>3</experiments>
</comment>
<comment type="interaction">
    <interactant intactId="EBI-12813389">
        <id>Q8TDS5</id>
    </interactant>
    <interactant intactId="EBI-11986293">
        <id>P0CG20</id>
        <label>PRR35</label>
    </interactant>
    <organismsDiffer>false</organismsDiffer>
    <experiments>3</experiments>
</comment>
<comment type="interaction">
    <interactant intactId="EBI-12813389">
        <id>Q8TDS5</id>
    </interactant>
    <interactant intactId="EBI-744023">
        <id>Q9BTL3</id>
        <label>RAMAC</label>
    </interactant>
    <organismsDiffer>false</organismsDiffer>
    <experiments>3</experiments>
</comment>
<comment type="interaction">
    <interactant intactId="EBI-12813389">
        <id>Q8TDS5</id>
    </interactant>
    <interactant intactId="EBI-11963050">
        <id>O43251-10</id>
        <label>RBFOX2</label>
    </interactant>
    <organismsDiffer>false</organismsDiffer>
    <experiments>3</experiments>
</comment>
<comment type="interaction">
    <interactant intactId="EBI-12813389">
        <id>Q8TDS5</id>
    </interactant>
    <interactant intactId="EBI-10253121">
        <id>Q6P9E2</id>
        <label>RECK</label>
    </interactant>
    <organismsDiffer>false</organismsDiffer>
    <experiments>3</experiments>
</comment>
<comment type="interaction">
    <interactant intactId="EBI-12813389">
        <id>Q8TDS5</id>
    </interactant>
    <interactant intactId="EBI-751555">
        <id>Q9H0X6</id>
        <label>RNF208</label>
    </interactant>
    <organismsDiffer>false</organismsDiffer>
    <experiments>3</experiments>
</comment>
<comment type="interaction">
    <interactant intactId="EBI-12813389">
        <id>Q8TDS5</id>
    </interactant>
    <interactant intactId="EBI-2341200">
        <id>Q9H0F5</id>
        <label>RNF38</label>
    </interactant>
    <organismsDiffer>false</organismsDiffer>
    <experiments>3</experiments>
</comment>
<comment type="interaction">
    <interactant intactId="EBI-12813389">
        <id>Q8TDS5</id>
    </interactant>
    <interactant intactId="EBI-2845060">
        <id>Q7L0R7</id>
        <label>RNF44</label>
    </interactant>
    <organismsDiffer>false</organismsDiffer>
    <experiments>3</experiments>
</comment>
<comment type="interaction">
    <interactant intactId="EBI-12813389">
        <id>Q8TDS5</id>
    </interactant>
    <interactant intactId="EBI-357061">
        <id>Q92734</id>
        <label>TFG</label>
    </interactant>
    <organismsDiffer>false</organismsDiffer>
    <experiments>3</experiments>
</comment>
<comment type="interaction">
    <interactant intactId="EBI-12813389">
        <id>Q8TDS5</id>
    </interactant>
    <interactant intactId="EBI-11741437">
        <id>Q08117-2</id>
        <label>TLE5</label>
    </interactant>
    <organismsDiffer>false</organismsDiffer>
    <experiments>3</experiments>
</comment>
<comment type="interaction">
    <interactant intactId="EBI-12813389">
        <id>Q8TDS5</id>
    </interactant>
    <interactant intactId="EBI-396540">
        <id>Q12888</id>
        <label>TP53BP1</label>
    </interactant>
    <organismsDiffer>false</organismsDiffer>
    <experiments>3</experiments>
</comment>
<comment type="interaction">
    <interactant intactId="EBI-12813389">
        <id>Q8TDS5</id>
    </interactant>
    <interactant intactId="EBI-11957216">
        <id>A8MV65-2</id>
        <label>VGLL3</label>
    </interactant>
    <organismsDiffer>false</organismsDiffer>
    <experiments>3</experiments>
</comment>
<comment type="interaction">
    <interactant intactId="EBI-12813389">
        <id>Q8TDS5</id>
    </interactant>
    <interactant intactId="EBI-10188476">
        <id>A0A0C4DGF1</id>
        <label>ZBTB32</label>
    </interactant>
    <organismsDiffer>false</organismsDiffer>
    <experiments>3</experiments>
</comment>
<comment type="interaction">
    <interactant intactId="EBI-12813389">
        <id>Q8TDS5</id>
    </interactant>
    <interactant intactId="EBI-742550">
        <id>Q96K80</id>
        <label>ZC3H10</label>
    </interactant>
    <organismsDiffer>false</organismsDiffer>
    <experiments>3</experiments>
</comment>
<comment type="interaction">
    <interactant intactId="EBI-12813389">
        <id>Q8TDS5</id>
    </interactant>
    <interactant intactId="EBI-11963196">
        <id>Q15915</id>
        <label>ZIC1</label>
    </interactant>
    <organismsDiffer>false</organismsDiffer>
    <experiments>3</experiments>
</comment>
<comment type="subcellular location">
    <subcellularLocation>
        <location evidence="1">Membrane</location>
        <topology evidence="1">Multi-pass membrane protein</topology>
    </subcellularLocation>
</comment>
<comment type="tissue specificity">
    <text evidence="4 5">Expressed in various tissues except brain. Expression is more intense in liver, kidney, peripheral leukocyte, lung, and spleen than in other tissues. Highly expressed in eosinophils, neutrophils, and lung macrophages.</text>
</comment>
<comment type="similarity">
    <text evidence="2">Belongs to the G-protein coupled receptor 1 family.</text>
</comment>
<accession>Q8TDS5</accession>
<accession>Q86WP7</accession>
<accession>Q8NGW4</accession>
<organism>
    <name type="scientific">Homo sapiens</name>
    <name type="common">Human</name>
    <dbReference type="NCBI Taxonomy" id="9606"/>
    <lineage>
        <taxon>Eukaryota</taxon>
        <taxon>Metazoa</taxon>
        <taxon>Chordata</taxon>
        <taxon>Craniata</taxon>
        <taxon>Vertebrata</taxon>
        <taxon>Euteleostomi</taxon>
        <taxon>Mammalia</taxon>
        <taxon>Eutheria</taxon>
        <taxon>Euarchontoglires</taxon>
        <taxon>Primates</taxon>
        <taxon>Haplorrhini</taxon>
        <taxon>Catarrhini</taxon>
        <taxon>Hominidae</taxon>
        <taxon>Homo</taxon>
    </lineage>
</organism>
<reference key="1">
    <citation type="journal article" date="2002" name="J. Biol. Chem.">
        <title>Identification of a novel human eicosanoid receptor coupled to G(i/o).</title>
        <authorList>
            <person name="Hosoi T."/>
            <person name="Koguchi Y."/>
            <person name="Sugikawa E."/>
            <person name="Chikada A."/>
            <person name="Ogawa K."/>
            <person name="Tsuda N."/>
            <person name="Suto N."/>
            <person name="Tsunoda S."/>
            <person name="Taniguchi T."/>
            <person name="Ohnuki T."/>
        </authorList>
    </citation>
    <scope>NUCLEOTIDE SEQUENCE [MRNA]</scope>
    <scope>FUNCTION</scope>
    <scope>TISSUE SPECIFICITY</scope>
</reference>
<reference key="2">
    <citation type="journal article" date="2003" name="Mol. Pharmacol.">
        <title>Expression and characterization of a 5-oxo-6E,8Z,11Z,14Z-eicosatetraenoic acid receptor highly expressed on human eosinophils and neutrophils.</title>
        <authorList>
            <person name="Jones C.E."/>
            <person name="Holden S."/>
            <person name="Tenaillon L."/>
            <person name="Bhatia U."/>
            <person name="Seuwen K."/>
            <person name="Tranter P."/>
            <person name="Turner J."/>
            <person name="Kettle R."/>
            <person name="Bouhelal R."/>
            <person name="Charlton S."/>
            <person name="Nirmala N.R."/>
            <person name="Jarai G."/>
            <person name="Finan P."/>
        </authorList>
    </citation>
    <scope>NUCLEOTIDE SEQUENCE [MRNA]</scope>
    <scope>FUNCTION</scope>
    <scope>TISSUE SPECIFICITY</scope>
    <scope>VARIANT VAL-368</scope>
</reference>
<reference key="3">
    <citation type="submission" date="2001-07" db="EMBL/GenBank/DDBJ databases">
        <title>Genome-wide discovery and analysis of human seven transmembrane helix receptor genes.</title>
        <authorList>
            <person name="Suwa M."/>
            <person name="Sato T."/>
            <person name="Okouchi I."/>
            <person name="Arita M."/>
            <person name="Futami K."/>
            <person name="Matsumoto S."/>
            <person name="Tsutsumi S."/>
            <person name="Aburatani H."/>
            <person name="Asai K."/>
            <person name="Akiyama Y."/>
        </authorList>
    </citation>
    <scope>NUCLEOTIDE SEQUENCE [GENOMIC DNA]</scope>
</reference>
<reference key="4">
    <citation type="journal article" date="2002" name="FEBS Lett.">
        <title>Identification of G protein-coupled receptor genes from the human genome sequence.</title>
        <authorList>
            <person name="Takeda S."/>
            <person name="Kadowaki S."/>
            <person name="Haga T."/>
            <person name="Takaesu H."/>
            <person name="Mitaku S."/>
        </authorList>
    </citation>
    <scope>NUCLEOTIDE SEQUENCE [LARGE SCALE GENOMIC DNA]</scope>
</reference>
<reference key="5">
    <citation type="journal article" date="2005" name="Nature">
        <title>Generation and annotation of the DNA sequences of human chromosomes 2 and 4.</title>
        <authorList>
            <person name="Hillier L.W."/>
            <person name="Graves T.A."/>
            <person name="Fulton R.S."/>
            <person name="Fulton L.A."/>
            <person name="Pepin K.H."/>
            <person name="Minx P."/>
            <person name="Wagner-McPherson C."/>
            <person name="Layman D."/>
            <person name="Wylie K."/>
            <person name="Sekhon M."/>
            <person name="Becker M.C."/>
            <person name="Fewell G.A."/>
            <person name="Delehaunty K.D."/>
            <person name="Miner T.L."/>
            <person name="Nash W.E."/>
            <person name="Kremitzki C."/>
            <person name="Oddy L."/>
            <person name="Du H."/>
            <person name="Sun H."/>
            <person name="Bradshaw-Cordum H."/>
            <person name="Ali J."/>
            <person name="Carter J."/>
            <person name="Cordes M."/>
            <person name="Harris A."/>
            <person name="Isak A."/>
            <person name="van Brunt A."/>
            <person name="Nguyen C."/>
            <person name="Du F."/>
            <person name="Courtney L."/>
            <person name="Kalicki J."/>
            <person name="Ozersky P."/>
            <person name="Abbott S."/>
            <person name="Armstrong J."/>
            <person name="Belter E.A."/>
            <person name="Caruso L."/>
            <person name="Cedroni M."/>
            <person name="Cotton M."/>
            <person name="Davidson T."/>
            <person name="Desai A."/>
            <person name="Elliott G."/>
            <person name="Erb T."/>
            <person name="Fronick C."/>
            <person name="Gaige T."/>
            <person name="Haakenson W."/>
            <person name="Haglund K."/>
            <person name="Holmes A."/>
            <person name="Harkins R."/>
            <person name="Kim K."/>
            <person name="Kruchowski S.S."/>
            <person name="Strong C.M."/>
            <person name="Grewal N."/>
            <person name="Goyea E."/>
            <person name="Hou S."/>
            <person name="Levy A."/>
            <person name="Martinka S."/>
            <person name="Mead K."/>
            <person name="McLellan M.D."/>
            <person name="Meyer R."/>
            <person name="Randall-Maher J."/>
            <person name="Tomlinson C."/>
            <person name="Dauphin-Kohlberg S."/>
            <person name="Kozlowicz-Reilly A."/>
            <person name="Shah N."/>
            <person name="Swearengen-Shahid S."/>
            <person name="Snider J."/>
            <person name="Strong J.T."/>
            <person name="Thompson J."/>
            <person name="Yoakum M."/>
            <person name="Leonard S."/>
            <person name="Pearman C."/>
            <person name="Trani L."/>
            <person name="Radionenko M."/>
            <person name="Waligorski J.E."/>
            <person name="Wang C."/>
            <person name="Rock S.M."/>
            <person name="Tin-Wollam A.-M."/>
            <person name="Maupin R."/>
            <person name="Latreille P."/>
            <person name="Wendl M.C."/>
            <person name="Yang S.-P."/>
            <person name="Pohl C."/>
            <person name="Wallis J.W."/>
            <person name="Spieth J."/>
            <person name="Bieri T.A."/>
            <person name="Berkowicz N."/>
            <person name="Nelson J.O."/>
            <person name="Osborne J."/>
            <person name="Ding L."/>
            <person name="Meyer R."/>
            <person name="Sabo A."/>
            <person name="Shotland Y."/>
            <person name="Sinha P."/>
            <person name="Wohldmann P.E."/>
            <person name="Cook L.L."/>
            <person name="Hickenbotham M.T."/>
            <person name="Eldred J."/>
            <person name="Williams D."/>
            <person name="Jones T.A."/>
            <person name="She X."/>
            <person name="Ciccarelli F.D."/>
            <person name="Izaurralde E."/>
            <person name="Taylor J."/>
            <person name="Schmutz J."/>
            <person name="Myers R.M."/>
            <person name="Cox D.R."/>
            <person name="Huang X."/>
            <person name="McPherson J.D."/>
            <person name="Mardis E.R."/>
            <person name="Clifton S.W."/>
            <person name="Warren W.C."/>
            <person name="Chinwalla A.T."/>
            <person name="Eddy S.R."/>
            <person name="Marra M.A."/>
            <person name="Ovcharenko I."/>
            <person name="Furey T.S."/>
            <person name="Miller W."/>
            <person name="Eichler E.E."/>
            <person name="Bork P."/>
            <person name="Suyama M."/>
            <person name="Torrents D."/>
            <person name="Waterston R.H."/>
            <person name="Wilson R.K."/>
        </authorList>
    </citation>
    <scope>NUCLEOTIDE SEQUENCE [LARGE SCALE GENOMIC DNA]</scope>
</reference>
<reference key="6">
    <citation type="journal article" date="2004" name="Genome Res.">
        <title>The status, quality, and expansion of the NIH full-length cDNA project: the Mammalian Gene Collection (MGC).</title>
        <authorList>
            <consortium name="The MGC Project Team"/>
        </authorList>
    </citation>
    <scope>NUCLEOTIDE SEQUENCE [LARGE SCALE MRNA]</scope>
    <source>
        <tissue>Skin</tissue>
    </source>
</reference>
<name>OXER1_HUMAN</name>
<keyword id="KW-1015">Disulfide bond</keyword>
<keyword id="KW-0297">G-protein coupled receptor</keyword>
<keyword id="KW-0325">Glycoprotein</keyword>
<keyword id="KW-0472">Membrane</keyword>
<keyword id="KW-1267">Proteomics identification</keyword>
<keyword id="KW-0675">Receptor</keyword>
<keyword id="KW-1185">Reference proteome</keyword>
<keyword id="KW-0807">Transducer</keyword>
<keyword id="KW-0812">Transmembrane</keyword>
<keyword id="KW-1133">Transmembrane helix</keyword>
<protein>
    <recommendedName>
        <fullName>Oxoeicosanoid receptor 1</fullName>
    </recommendedName>
    <alternativeName>
        <fullName>5-oxo-ETE G-protein coupled receptor</fullName>
    </alternativeName>
    <alternativeName>
        <fullName>G-protein coupled receptor 170</fullName>
    </alternativeName>
    <alternativeName>
        <fullName>G-protein coupled receptor R527</fullName>
    </alternativeName>
    <alternativeName>
        <fullName>G-protein coupled receptor TG1019</fullName>
    </alternativeName>
</protein>